<sequence length="809" mass="89964">MKGTPQYHFIGIGGIGMSALAHILLDRGYEVSGSDLYESYTIESLKAKGARCFSGHDSSHVPHDAVVVYSSSIAPDNVEYLTAIQRSSRLLHRAELLSQLMEGYESILVSGSHGKTGTSSLIRAIFQEAQKDPSYAIGGLAANCLNGYSGSSKIFVAEADESDGSLKHYTPRAVVITNIDNEHLNNYAGNLDNLVQVIQDFSRKVTDLNKVFYNGDCPILKGNVQGISYGYSPECQLHIVSYNQKAWQSHFSFTFLGQEYQDIELNLPGQHNAANAAAACGVALTFGIDINIIRKALKKFSGVHRRLERKNISESFLFLEDYAHHPVEVAHTLRSVRDAVGLRRVIAIFQPHRFSRLEECLQTFPKAFQEADEVILTDVYSAGESPRESIILSDLAEQIRKSSYVHCCYVPHGDIVDYLRNYIRIHDVCVSLGAGNIYTIGEALKDFNPKKLSIGLVCGGKSCEHDISLLSAQHVSKYISPEFYDVSYFIINRQGLWRTGKDFPHLIEETQGDSPLSSEIASALAKVDCLFPVLHGPFGEDGTIQGFFEILGKPYAGPSLSLAATAMDKLLTKRIASAVGVPVVPYQPLNLCFWKRNPELCIQNLIETFSFPMIVKTAHLGSSIGIFLVRDKEELQEKISEAFLYDTDVFVEESRLGSREIEVSCIGHSSSWYCMAGPNERCGASGFIDYQEKYGFDGIDCAKISFDLQLSQESLDCVRELAERVYRAMQGKGSARIDFFLDEEGNYWLSEVNPIPGMTAASPFLQAFVHAGWTQEQIVDHFIIDALHKFDKQQTIEQAFTKEQDLVKR</sequence>
<feature type="chain" id="PRO_0000177915" description="Bifunctional enzyme MurC/Ddl">
    <location>
        <begin position="1"/>
        <end position="809"/>
    </location>
</feature>
<feature type="domain" description="ATP-grasp">
    <location>
        <begin position="573"/>
        <end position="784"/>
    </location>
</feature>
<feature type="region of interest" description="UDP-N-acetylmuramate--alanine ligase">
    <location>
        <begin position="1"/>
        <end position="450"/>
    </location>
</feature>
<feature type="region of interest" description="D-alanine--D-alanine ligase">
    <location>
        <begin position="451"/>
        <end position="809"/>
    </location>
</feature>
<feature type="binding site" evidence="2">
    <location>
        <begin position="111"/>
        <end position="117"/>
    </location>
    <ligand>
        <name>ATP</name>
        <dbReference type="ChEBI" id="CHEBI:30616"/>
    </ligand>
</feature>
<feature type="binding site" evidence="1">
    <location>
        <begin position="606"/>
        <end position="661"/>
    </location>
    <ligand>
        <name>ATP</name>
        <dbReference type="ChEBI" id="CHEBI:30616"/>
    </ligand>
</feature>
<feature type="binding site" evidence="1">
    <location>
        <position position="738"/>
    </location>
    <ligand>
        <name>Mg(2+)</name>
        <dbReference type="ChEBI" id="CHEBI:18420"/>
        <label>1</label>
    </ligand>
</feature>
<feature type="binding site" evidence="1">
    <location>
        <position position="751"/>
    </location>
    <ligand>
        <name>Mg(2+)</name>
        <dbReference type="ChEBI" id="CHEBI:18420"/>
        <label>1</label>
    </ligand>
</feature>
<feature type="binding site" evidence="1">
    <location>
        <position position="751"/>
    </location>
    <ligand>
        <name>Mg(2+)</name>
        <dbReference type="ChEBI" id="CHEBI:18420"/>
        <label>2</label>
    </ligand>
</feature>
<feature type="binding site" evidence="1">
    <location>
        <position position="753"/>
    </location>
    <ligand>
        <name>Mg(2+)</name>
        <dbReference type="ChEBI" id="CHEBI:18420"/>
        <label>2</label>
    </ligand>
</feature>
<feature type="sequence conflict" description="In Ref. 4; AAP98866." evidence="3" ref="4">
    <original>L</original>
    <variation>P</variation>
    <location>
        <position position="560"/>
    </location>
</feature>
<organism>
    <name type="scientific">Chlamydia pneumoniae</name>
    <name type="common">Chlamydophila pneumoniae</name>
    <dbReference type="NCBI Taxonomy" id="83558"/>
    <lineage>
        <taxon>Bacteria</taxon>
        <taxon>Pseudomonadati</taxon>
        <taxon>Chlamydiota</taxon>
        <taxon>Chlamydiia</taxon>
        <taxon>Chlamydiales</taxon>
        <taxon>Chlamydiaceae</taxon>
        <taxon>Chlamydia/Chlamydophila group</taxon>
        <taxon>Chlamydia</taxon>
    </lineage>
</organism>
<name>MUDD_CHLPN</name>
<accession>Q9Z701</accession>
<accession>Q9JQB5</accession>
<reference key="1">
    <citation type="journal article" date="1999" name="Nat. Genet.">
        <title>Comparative genomes of Chlamydia pneumoniae and C. trachomatis.</title>
        <authorList>
            <person name="Kalman S."/>
            <person name="Mitchell W.P."/>
            <person name="Marathe R."/>
            <person name="Lammel C.J."/>
            <person name="Fan J."/>
            <person name="Hyman R.W."/>
            <person name="Olinger L."/>
            <person name="Grimwood J."/>
            <person name="Davis R.W."/>
            <person name="Stephens R.S."/>
        </authorList>
    </citation>
    <scope>NUCLEOTIDE SEQUENCE [LARGE SCALE GENOMIC DNA]</scope>
    <source>
        <strain>CWL029</strain>
    </source>
</reference>
<reference key="2">
    <citation type="journal article" date="2000" name="Nucleic Acids Res.">
        <title>Genome sequences of Chlamydia trachomatis MoPn and Chlamydia pneumoniae AR39.</title>
        <authorList>
            <person name="Read T.D."/>
            <person name="Brunham R.C."/>
            <person name="Shen C."/>
            <person name="Gill S.R."/>
            <person name="Heidelberg J.F."/>
            <person name="White O."/>
            <person name="Hickey E.K."/>
            <person name="Peterson J.D."/>
            <person name="Utterback T.R."/>
            <person name="Berry K.J."/>
            <person name="Bass S."/>
            <person name="Linher K.D."/>
            <person name="Weidman J.F."/>
            <person name="Khouri H.M."/>
            <person name="Craven B."/>
            <person name="Bowman C."/>
            <person name="Dodson R.J."/>
            <person name="Gwinn M.L."/>
            <person name="Nelson W.C."/>
            <person name="DeBoy R.T."/>
            <person name="Kolonay J.F."/>
            <person name="McClarty G."/>
            <person name="Salzberg S.L."/>
            <person name="Eisen J.A."/>
            <person name="Fraser C.M."/>
        </authorList>
    </citation>
    <scope>NUCLEOTIDE SEQUENCE [LARGE SCALE GENOMIC DNA]</scope>
    <source>
        <strain>AR39</strain>
    </source>
</reference>
<reference key="3">
    <citation type="journal article" date="2000" name="Nucleic Acids Res.">
        <title>Comparison of whole genome sequences of Chlamydia pneumoniae J138 from Japan and CWL029 from USA.</title>
        <authorList>
            <person name="Shirai M."/>
            <person name="Hirakawa H."/>
            <person name="Kimoto M."/>
            <person name="Tabuchi M."/>
            <person name="Kishi F."/>
            <person name="Ouchi K."/>
            <person name="Shiba T."/>
            <person name="Ishii K."/>
            <person name="Hattori M."/>
            <person name="Kuhara S."/>
            <person name="Nakazawa T."/>
        </authorList>
    </citation>
    <scope>NUCLEOTIDE SEQUENCE [LARGE SCALE GENOMIC DNA]</scope>
    <source>
        <strain>J138</strain>
    </source>
</reference>
<reference key="4">
    <citation type="submission" date="2002-05" db="EMBL/GenBank/DDBJ databases">
        <title>The genome sequence of Chlamydia pneumoniae TW183 and comparison with other Chlamydia strains based on whole genome sequence analysis.</title>
        <authorList>
            <person name="Geng M.M."/>
            <person name="Schuhmacher A."/>
            <person name="Muehldorfer I."/>
            <person name="Bensch K.W."/>
            <person name="Schaefer K.P."/>
            <person name="Schneider S."/>
            <person name="Pohl T."/>
            <person name="Essig A."/>
            <person name="Marre R."/>
            <person name="Melchers K."/>
        </authorList>
    </citation>
    <scope>NUCLEOTIDE SEQUENCE [LARGE SCALE GENOMIC DNA]</scope>
    <source>
        <strain>TW-183</strain>
    </source>
</reference>
<proteinExistence type="inferred from homology"/>
<evidence type="ECO:0000250" key="1"/>
<evidence type="ECO:0000255" key="2"/>
<evidence type="ECO:0000305" key="3"/>
<dbReference type="EC" id="6.3.2.8"/>
<dbReference type="EC" id="6.3.2.4"/>
<dbReference type="EMBL" id="AE001363">
    <property type="protein sequence ID" value="AAD19043.1"/>
    <property type="molecule type" value="Genomic_DNA"/>
</dbReference>
<dbReference type="EMBL" id="AE002161">
    <property type="protein sequence ID" value="AAF38741.1"/>
    <property type="molecule type" value="Genomic_DNA"/>
</dbReference>
<dbReference type="EMBL" id="BA000008">
    <property type="protein sequence ID" value="BAA99113.1"/>
    <property type="molecule type" value="Genomic_DNA"/>
</dbReference>
<dbReference type="EMBL" id="AE009440">
    <property type="protein sequence ID" value="AAP98866.1"/>
    <property type="molecule type" value="Genomic_DNA"/>
</dbReference>
<dbReference type="PIR" id="D72022">
    <property type="entry name" value="D72022"/>
</dbReference>
<dbReference type="PIR" id="G86603">
    <property type="entry name" value="G86603"/>
</dbReference>
<dbReference type="RefSeq" id="NP_225100.1">
    <property type="nucleotide sequence ID" value="NC_000922.1"/>
</dbReference>
<dbReference type="RefSeq" id="WP_010883540.1">
    <property type="nucleotide sequence ID" value="NZ_LN847257.1"/>
</dbReference>
<dbReference type="SMR" id="Q9Z701"/>
<dbReference type="STRING" id="406984.CPK_ORF00317"/>
<dbReference type="GeneID" id="45050961"/>
<dbReference type="KEGG" id="cpa:CP_0961"/>
<dbReference type="KEGG" id="cpj:murC_ddlA"/>
<dbReference type="KEGG" id="cpn:CPn_0905"/>
<dbReference type="KEGG" id="cpt:CpB0937"/>
<dbReference type="PATRIC" id="fig|115713.3.peg.986"/>
<dbReference type="eggNOG" id="COG0773">
    <property type="taxonomic scope" value="Bacteria"/>
</dbReference>
<dbReference type="eggNOG" id="COG1181">
    <property type="taxonomic scope" value="Bacteria"/>
</dbReference>
<dbReference type="HOGENOM" id="CLU_019395_0_0_0"/>
<dbReference type="OrthoDB" id="9804126at2"/>
<dbReference type="UniPathway" id="UPA00219"/>
<dbReference type="Proteomes" id="UP000000583">
    <property type="component" value="Chromosome"/>
</dbReference>
<dbReference type="Proteomes" id="UP000000801">
    <property type="component" value="Chromosome"/>
</dbReference>
<dbReference type="GO" id="GO:0005737">
    <property type="term" value="C:cytoplasm"/>
    <property type="evidence" value="ECO:0007669"/>
    <property type="project" value="UniProtKB-SubCell"/>
</dbReference>
<dbReference type="GO" id="GO:0005524">
    <property type="term" value="F:ATP binding"/>
    <property type="evidence" value="ECO:0007669"/>
    <property type="project" value="UniProtKB-UniRule"/>
</dbReference>
<dbReference type="GO" id="GO:0008716">
    <property type="term" value="F:D-alanine-D-alanine ligase activity"/>
    <property type="evidence" value="ECO:0007669"/>
    <property type="project" value="UniProtKB-UniRule"/>
</dbReference>
<dbReference type="GO" id="GO:0046872">
    <property type="term" value="F:metal ion binding"/>
    <property type="evidence" value="ECO:0007669"/>
    <property type="project" value="UniProtKB-KW"/>
</dbReference>
<dbReference type="GO" id="GO:0008763">
    <property type="term" value="F:UDP-N-acetylmuramate-L-alanine ligase activity"/>
    <property type="evidence" value="ECO:0007669"/>
    <property type="project" value="UniProtKB-UniRule"/>
</dbReference>
<dbReference type="GO" id="GO:0051301">
    <property type="term" value="P:cell division"/>
    <property type="evidence" value="ECO:0007669"/>
    <property type="project" value="UniProtKB-KW"/>
</dbReference>
<dbReference type="GO" id="GO:0071555">
    <property type="term" value="P:cell wall organization"/>
    <property type="evidence" value="ECO:0007669"/>
    <property type="project" value="UniProtKB-KW"/>
</dbReference>
<dbReference type="GO" id="GO:0009252">
    <property type="term" value="P:peptidoglycan biosynthetic process"/>
    <property type="evidence" value="ECO:0007669"/>
    <property type="project" value="UniProtKB-UniRule"/>
</dbReference>
<dbReference type="GO" id="GO:0008360">
    <property type="term" value="P:regulation of cell shape"/>
    <property type="evidence" value="ECO:0007669"/>
    <property type="project" value="UniProtKB-KW"/>
</dbReference>
<dbReference type="Gene3D" id="3.40.50.20">
    <property type="match status" value="1"/>
</dbReference>
<dbReference type="Gene3D" id="3.30.1490.20">
    <property type="entry name" value="ATP-grasp fold, A domain"/>
    <property type="match status" value="1"/>
</dbReference>
<dbReference type="Gene3D" id="3.30.470.20">
    <property type="entry name" value="ATP-grasp fold, B domain"/>
    <property type="match status" value="1"/>
</dbReference>
<dbReference type="Gene3D" id="3.90.190.20">
    <property type="entry name" value="Mur ligase, C-terminal domain"/>
    <property type="match status" value="1"/>
</dbReference>
<dbReference type="Gene3D" id="3.40.1190.10">
    <property type="entry name" value="Mur-like, catalytic domain"/>
    <property type="match status" value="1"/>
</dbReference>
<dbReference type="Gene3D" id="3.40.50.720">
    <property type="entry name" value="NAD(P)-binding Rossmann-like Domain"/>
    <property type="match status" value="1"/>
</dbReference>
<dbReference type="HAMAP" id="MF_00047">
    <property type="entry name" value="Dala_Dala_lig"/>
    <property type="match status" value="1"/>
</dbReference>
<dbReference type="HAMAP" id="MF_00046">
    <property type="entry name" value="MurC"/>
    <property type="match status" value="1"/>
</dbReference>
<dbReference type="InterPro" id="IPR011761">
    <property type="entry name" value="ATP-grasp"/>
</dbReference>
<dbReference type="InterPro" id="IPR013815">
    <property type="entry name" value="ATP_grasp_subdomain_1"/>
</dbReference>
<dbReference type="InterPro" id="IPR000291">
    <property type="entry name" value="D-Ala_lig_Van_CS"/>
</dbReference>
<dbReference type="InterPro" id="IPR005905">
    <property type="entry name" value="D_ala_D_ala"/>
</dbReference>
<dbReference type="InterPro" id="IPR011095">
    <property type="entry name" value="Dala_Dala_lig_C"/>
</dbReference>
<dbReference type="InterPro" id="IPR011127">
    <property type="entry name" value="Dala_Dala_lig_N"/>
</dbReference>
<dbReference type="InterPro" id="IPR036565">
    <property type="entry name" value="Mur-like_cat_sf"/>
</dbReference>
<dbReference type="InterPro" id="IPR004101">
    <property type="entry name" value="Mur_ligase_C"/>
</dbReference>
<dbReference type="InterPro" id="IPR036615">
    <property type="entry name" value="Mur_ligase_C_dom_sf"/>
</dbReference>
<dbReference type="InterPro" id="IPR013221">
    <property type="entry name" value="Mur_ligase_cen"/>
</dbReference>
<dbReference type="InterPro" id="IPR000713">
    <property type="entry name" value="Mur_ligase_N"/>
</dbReference>
<dbReference type="InterPro" id="IPR050061">
    <property type="entry name" value="MurCDEF_pg_biosynth"/>
</dbReference>
<dbReference type="InterPro" id="IPR016185">
    <property type="entry name" value="PreATP-grasp_dom_sf"/>
</dbReference>
<dbReference type="InterPro" id="IPR005758">
    <property type="entry name" value="UDP-N-AcMur_Ala_ligase_MurC"/>
</dbReference>
<dbReference type="NCBIfam" id="TIGR01205">
    <property type="entry name" value="D_ala_D_alaTIGR"/>
    <property type="match status" value="1"/>
</dbReference>
<dbReference type="NCBIfam" id="TIGR01082">
    <property type="entry name" value="murC"/>
    <property type="match status" value="1"/>
</dbReference>
<dbReference type="NCBIfam" id="NF002528">
    <property type="entry name" value="PRK01966.1-4"/>
    <property type="match status" value="1"/>
</dbReference>
<dbReference type="NCBIfam" id="NF011171">
    <property type="entry name" value="PRK14573.1"/>
    <property type="match status" value="1"/>
</dbReference>
<dbReference type="PANTHER" id="PTHR43445:SF3">
    <property type="entry name" value="UDP-N-ACETYLMURAMATE--L-ALANINE LIGASE"/>
    <property type="match status" value="1"/>
</dbReference>
<dbReference type="PANTHER" id="PTHR43445">
    <property type="entry name" value="UDP-N-ACETYLMURAMATE--L-ALANINE LIGASE-RELATED"/>
    <property type="match status" value="1"/>
</dbReference>
<dbReference type="Pfam" id="PF07478">
    <property type="entry name" value="Dala_Dala_lig_C"/>
    <property type="match status" value="1"/>
</dbReference>
<dbReference type="Pfam" id="PF01820">
    <property type="entry name" value="Dala_Dala_lig_N"/>
    <property type="match status" value="1"/>
</dbReference>
<dbReference type="Pfam" id="PF01225">
    <property type="entry name" value="Mur_ligase"/>
    <property type="match status" value="1"/>
</dbReference>
<dbReference type="Pfam" id="PF02875">
    <property type="entry name" value="Mur_ligase_C"/>
    <property type="match status" value="1"/>
</dbReference>
<dbReference type="Pfam" id="PF08245">
    <property type="entry name" value="Mur_ligase_M"/>
    <property type="match status" value="1"/>
</dbReference>
<dbReference type="SUPFAM" id="SSF56059">
    <property type="entry name" value="Glutathione synthetase ATP-binding domain-like"/>
    <property type="match status" value="1"/>
</dbReference>
<dbReference type="SUPFAM" id="SSF51984">
    <property type="entry name" value="MurCD N-terminal domain"/>
    <property type="match status" value="1"/>
</dbReference>
<dbReference type="SUPFAM" id="SSF53623">
    <property type="entry name" value="MurD-like peptide ligases, catalytic domain"/>
    <property type="match status" value="1"/>
</dbReference>
<dbReference type="SUPFAM" id="SSF53244">
    <property type="entry name" value="MurD-like peptide ligases, peptide-binding domain"/>
    <property type="match status" value="1"/>
</dbReference>
<dbReference type="SUPFAM" id="SSF52440">
    <property type="entry name" value="PreATP-grasp domain"/>
    <property type="match status" value="1"/>
</dbReference>
<dbReference type="PROSITE" id="PS50975">
    <property type="entry name" value="ATP_GRASP"/>
    <property type="match status" value="1"/>
</dbReference>
<dbReference type="PROSITE" id="PS00843">
    <property type="entry name" value="DALA_DALA_LIGASE_1"/>
    <property type="match status" value="1"/>
</dbReference>
<dbReference type="PROSITE" id="PS00844">
    <property type="entry name" value="DALA_DALA_LIGASE_2"/>
    <property type="match status" value="1"/>
</dbReference>
<gene>
    <name type="primary">murC/ddl</name>
    <name type="ordered locus">CPn_0905</name>
    <name type="ordered locus">CP_0961</name>
    <name type="ordered locus">CpB0937</name>
</gene>
<keyword id="KW-0067">ATP-binding</keyword>
<keyword id="KW-0131">Cell cycle</keyword>
<keyword id="KW-0132">Cell division</keyword>
<keyword id="KW-0133">Cell shape</keyword>
<keyword id="KW-0961">Cell wall biogenesis/degradation</keyword>
<keyword id="KW-0963">Cytoplasm</keyword>
<keyword id="KW-0436">Ligase</keyword>
<keyword id="KW-0460">Magnesium</keyword>
<keyword id="KW-0464">Manganese</keyword>
<keyword id="KW-0479">Metal-binding</keyword>
<keyword id="KW-0511">Multifunctional enzyme</keyword>
<keyword id="KW-0547">Nucleotide-binding</keyword>
<keyword id="KW-0573">Peptidoglycan synthesis</keyword>
<protein>
    <recommendedName>
        <fullName>Bifunctional enzyme MurC/Ddl</fullName>
    </recommendedName>
    <domain>
        <recommendedName>
            <fullName>UDP-N-acetylmuramate--L-alanine ligase</fullName>
            <ecNumber>6.3.2.8</ecNumber>
        </recommendedName>
        <alternativeName>
            <fullName>UDP-N-acetylmuramoyl-L-alanine synthetase</fullName>
        </alternativeName>
    </domain>
    <domain>
        <recommendedName>
            <fullName>D-alanine--D-alanine ligase</fullName>
            <ecNumber>6.3.2.4</ecNumber>
        </recommendedName>
        <alternativeName>
            <fullName>D-Ala-D-Ala ligase</fullName>
        </alternativeName>
        <alternativeName>
            <fullName>D-alanylalanine synthetase</fullName>
        </alternativeName>
    </domain>
</protein>
<comment type="function">
    <text evidence="1">Cell wall formation.</text>
</comment>
<comment type="catalytic activity">
    <reaction>
        <text>UDP-N-acetyl-alpha-D-muramate + L-alanine + ATP = UDP-N-acetyl-alpha-D-muramoyl-L-alanine + ADP + phosphate + H(+)</text>
        <dbReference type="Rhea" id="RHEA:23372"/>
        <dbReference type="ChEBI" id="CHEBI:15378"/>
        <dbReference type="ChEBI" id="CHEBI:30616"/>
        <dbReference type="ChEBI" id="CHEBI:43474"/>
        <dbReference type="ChEBI" id="CHEBI:57972"/>
        <dbReference type="ChEBI" id="CHEBI:70757"/>
        <dbReference type="ChEBI" id="CHEBI:83898"/>
        <dbReference type="ChEBI" id="CHEBI:456216"/>
        <dbReference type="EC" id="6.3.2.8"/>
    </reaction>
</comment>
<comment type="catalytic activity">
    <reaction>
        <text>2 D-alanine + ATP = D-alanyl-D-alanine + ADP + phosphate + H(+)</text>
        <dbReference type="Rhea" id="RHEA:11224"/>
        <dbReference type="ChEBI" id="CHEBI:15378"/>
        <dbReference type="ChEBI" id="CHEBI:30616"/>
        <dbReference type="ChEBI" id="CHEBI:43474"/>
        <dbReference type="ChEBI" id="CHEBI:57416"/>
        <dbReference type="ChEBI" id="CHEBI:57822"/>
        <dbReference type="ChEBI" id="CHEBI:456216"/>
        <dbReference type="EC" id="6.3.2.4"/>
    </reaction>
</comment>
<comment type="cofactor">
    <cofactor evidence="1">
        <name>Mg(2+)</name>
        <dbReference type="ChEBI" id="CHEBI:18420"/>
    </cofactor>
    <cofactor evidence="1">
        <name>Mn(2+)</name>
        <dbReference type="ChEBI" id="CHEBI:29035"/>
    </cofactor>
    <text evidence="1">Binds 2 magnesium or manganese ions per subunit.</text>
</comment>
<comment type="pathway">
    <text>Cell wall biogenesis; peptidoglycan biosynthesis.</text>
</comment>
<comment type="subcellular location">
    <subcellularLocation>
        <location evidence="1">Cytoplasm</location>
    </subcellularLocation>
</comment>
<comment type="similarity">
    <text evidence="3">In the N-terminal section; belongs to the MurCDEF family.</text>
</comment>
<comment type="similarity">
    <text evidence="3">In the C-terminal section; belongs to the D-alanine--D-alanine ligase family.</text>
</comment>